<geneLocation type="chloroplast"/>
<organism>
    <name type="scientific">Trieres chinensis</name>
    <name type="common">Marine centric diatom</name>
    <name type="synonym">Odontella sinensis</name>
    <dbReference type="NCBI Taxonomy" id="1514140"/>
    <lineage>
        <taxon>Eukaryota</taxon>
        <taxon>Sar</taxon>
        <taxon>Stramenopiles</taxon>
        <taxon>Ochrophyta</taxon>
        <taxon>Bacillariophyta</taxon>
        <taxon>Mediophyceae</taxon>
        <taxon>Biddulphiophycidae</taxon>
        <taxon>Eupodiscales</taxon>
        <taxon>Parodontellaceae</taxon>
        <taxon>Trieres</taxon>
    </lineage>
</organism>
<feature type="chain" id="PRO_0000067934" description="DNA-directed RNA polymerase subunit beta''">
    <location>
        <begin position="1"/>
        <end position="1481"/>
    </location>
</feature>
<feature type="binding site" evidence="1">
    <location>
        <position position="217"/>
    </location>
    <ligand>
        <name>Zn(2+)</name>
        <dbReference type="ChEBI" id="CHEBI:29105"/>
    </ligand>
</feature>
<feature type="binding site" evidence="1">
    <location>
        <position position="291"/>
    </location>
    <ligand>
        <name>Zn(2+)</name>
        <dbReference type="ChEBI" id="CHEBI:29105"/>
    </ligand>
</feature>
<feature type="binding site" evidence="1">
    <location>
        <position position="298"/>
    </location>
    <ligand>
        <name>Zn(2+)</name>
        <dbReference type="ChEBI" id="CHEBI:29105"/>
    </ligand>
</feature>
<feature type="binding site" evidence="1">
    <location>
        <position position="301"/>
    </location>
    <ligand>
        <name>Zn(2+)</name>
        <dbReference type="ChEBI" id="CHEBI:29105"/>
    </ligand>
</feature>
<comment type="function">
    <text evidence="1">DNA-dependent RNA polymerase catalyzes the transcription of DNA into RNA using the four ribonucleoside triphosphates as substrates.</text>
</comment>
<comment type="catalytic activity">
    <reaction evidence="1">
        <text>RNA(n) + a ribonucleoside 5'-triphosphate = RNA(n+1) + diphosphate</text>
        <dbReference type="Rhea" id="RHEA:21248"/>
        <dbReference type="Rhea" id="RHEA-COMP:14527"/>
        <dbReference type="Rhea" id="RHEA-COMP:17342"/>
        <dbReference type="ChEBI" id="CHEBI:33019"/>
        <dbReference type="ChEBI" id="CHEBI:61557"/>
        <dbReference type="ChEBI" id="CHEBI:140395"/>
        <dbReference type="EC" id="2.7.7.6"/>
    </reaction>
</comment>
<comment type="cofactor">
    <cofactor evidence="1">
        <name>Zn(2+)</name>
        <dbReference type="ChEBI" id="CHEBI:29105"/>
    </cofactor>
    <text evidence="1">Binds 1 Zn(2+) ion per subunit.</text>
</comment>
<comment type="subunit">
    <text evidence="1">In plastids the minimal PEP RNA polymerase catalytic core is composed of four subunits: alpha, beta, beta', and beta''. When a (nuclear-encoded) sigma factor is associated with the core the holoenzyme is formed, which can initiate transcription.</text>
</comment>
<comment type="subcellular location">
    <subcellularLocation>
        <location evidence="1">Plastid</location>
        <location evidence="1">Chloroplast</location>
    </subcellularLocation>
</comment>
<comment type="similarity">
    <text evidence="1">Belongs to the RNA polymerase beta' chain family. RpoC2 subfamily.</text>
</comment>
<sequence>MKTYTYQNTLISKKQLKQLLSWSFTTYDSMQACSLADELKYLGFKYASKAGISISIEDLKVPYNKNLLLKIAHQEINSSEKIYLKGKLTDVERFQKLIDTWNLTSESLKDELVSYFKRYDPLNSVYIMAFSGARGNLSQVRQLVGMRGLMSDPSGELLKLPIKKNFREGLTITDYLMSGYGARKGIIDTALKTANSGYLTRRLIDVAQDIIIREKDCLTKHSCLIINFESNLRIKKSVYEKILGRLLNKSIYDEKTKELIAEVNTQVTPNLIRTLKQKQIKHFYVRSPLTCSLYRSICQKCYGWDLANENLIDIGERIGIIAGQSIGEPGTQLTMRTFHTGGIFTSEIRGTIRSPISGIVKFSKRLKRIPIRTNRGEDVLLTKNAGSLIIIPEEKNSKPVKLELFRNTVVFHKNNQYIQKNAIIAELVDDEKQTRTEIKPVLTTTSGEVFIPRIINKLDNINKTKLLWILSGNVYQAPQHSFLNFYNDYKINKNSYIFRTKLINDFSGFTVFTNSKYNLFQRILQLVSNSCWILPNSKIQKLQSSLNKKPYFLNIKKLKYLIDLKLLNSKYFIEISSNKHFGTLVTNNYQTLTGGIGYYDFRCRDRIISDNKTISYFLPWEPKKKSISLEFLTLLESQFLKSFDILSLILKKNPDLEDCRLAFFPNNFNLHSKVETFSHYSKQTNSLNLAWFSIVKQFPYRSVIWMSEENYELNCDKNLLLVEHGNFISKNFEIVPGIVSKTGGIVMISDKNKLTQEITIKTGSVYEGSLFNYFKNKIFYPGEIILDSLKITQPSFCECFEGRFNDQLLIRPLQVYEVPQFKSLIQIFGTKFQTDLPFNLTNNISYRCKSNKIIKESRNFTIIDNILDVNIRTFAKKQFEIELFSDVKKNHLNFLVSEKLSLNHFILPQLRYTDIQSCLLVQTHQFIDSYTILGYLEVMISKSLEIVQFKSKYKDSKQICLISNEDCRTIPKNSVKNKTIDNLLINNANVNYTGKILMDNDEFVTIQKGRPYFFPNCKNEEAIINTDLIYKPLQSSSFLDNSKLKTNRLVYLNYFDITKGLINQRIHSQDIICKFSKMFIKKNGKLYSSLLAGLINRIAIINKQLDSQQIPSCPTSIRKYREENSSKKLKKRMKRKYKKITGIKTLLFIKNSELNLNPLKDTQDRKNSLTVATFMLSKFYKFTGGIHSITEDYFDEEVNSVFCKNGEFVKNGQTIGLLNFEKEITGDIVQGLPRVEQLLEARKKKQITKNLPINKKKGLLTQTTSIDSYFEFKKLGTSIKENEKINPHNLLKVYFNYYGLIKTFFCENSYTKDSYRLFNNYEASYRSFKKVQSLILNSVQSVYKSQGVSIADKHLEVIIKQMTTKVLITHQGNTSLLPREVIDLYHIEYINKIARIHKKHPALYVPLLLGITKAALNNPSFISAASFQETTRVLTKAAIEGRVDWLRGLKENIIIGHLMPAGTGSPVYTNCFKKSFENNLN</sequence>
<protein>
    <recommendedName>
        <fullName evidence="1">DNA-directed RNA polymerase subunit beta''</fullName>
        <ecNumber evidence="1">2.7.7.6</ecNumber>
    </recommendedName>
    <alternativeName>
        <fullName evidence="1">PEP</fullName>
    </alternativeName>
    <alternativeName>
        <fullName evidence="1">Plastid-encoded RNA polymerase subunit beta''</fullName>
        <shortName evidence="1">RNA polymerase subunit beta''</shortName>
    </alternativeName>
</protein>
<dbReference type="EC" id="2.7.7.6" evidence="1"/>
<dbReference type="EMBL" id="Z67753">
    <property type="protein sequence ID" value="CAA91746.1"/>
    <property type="molecule type" value="Genomic_DNA"/>
</dbReference>
<dbReference type="PIR" id="S78373">
    <property type="entry name" value="S78373"/>
</dbReference>
<dbReference type="RefSeq" id="NP_043714.1">
    <property type="nucleotide sequence ID" value="NC_001713.1"/>
</dbReference>
<dbReference type="SMR" id="P49468"/>
<dbReference type="GeneID" id="801758"/>
<dbReference type="GO" id="GO:0009507">
    <property type="term" value="C:chloroplast"/>
    <property type="evidence" value="ECO:0007669"/>
    <property type="project" value="UniProtKB-SubCell"/>
</dbReference>
<dbReference type="GO" id="GO:0000428">
    <property type="term" value="C:DNA-directed RNA polymerase complex"/>
    <property type="evidence" value="ECO:0007669"/>
    <property type="project" value="UniProtKB-KW"/>
</dbReference>
<dbReference type="GO" id="GO:0005739">
    <property type="term" value="C:mitochondrion"/>
    <property type="evidence" value="ECO:0007669"/>
    <property type="project" value="GOC"/>
</dbReference>
<dbReference type="GO" id="GO:0003677">
    <property type="term" value="F:DNA binding"/>
    <property type="evidence" value="ECO:0007669"/>
    <property type="project" value="UniProtKB-UniRule"/>
</dbReference>
<dbReference type="GO" id="GO:0003899">
    <property type="term" value="F:DNA-directed RNA polymerase activity"/>
    <property type="evidence" value="ECO:0007669"/>
    <property type="project" value="UniProtKB-UniRule"/>
</dbReference>
<dbReference type="GO" id="GO:0008270">
    <property type="term" value="F:zinc ion binding"/>
    <property type="evidence" value="ECO:0007669"/>
    <property type="project" value="UniProtKB-UniRule"/>
</dbReference>
<dbReference type="GO" id="GO:0006351">
    <property type="term" value="P:DNA-templated transcription"/>
    <property type="evidence" value="ECO:0007669"/>
    <property type="project" value="UniProtKB-UniRule"/>
</dbReference>
<dbReference type="CDD" id="cd02655">
    <property type="entry name" value="RNAP_beta'_C"/>
    <property type="match status" value="1"/>
</dbReference>
<dbReference type="Gene3D" id="1.10.132.30">
    <property type="match status" value="1"/>
</dbReference>
<dbReference type="Gene3D" id="1.10.150.390">
    <property type="match status" value="1"/>
</dbReference>
<dbReference type="Gene3D" id="1.10.1790.20">
    <property type="match status" value="1"/>
</dbReference>
<dbReference type="Gene3D" id="1.10.274.100">
    <property type="entry name" value="RNA polymerase Rpb1, domain 3"/>
    <property type="match status" value="1"/>
</dbReference>
<dbReference type="HAMAP" id="MF_01324">
    <property type="entry name" value="RNApol_bact_RpoC2"/>
    <property type="match status" value="1"/>
</dbReference>
<dbReference type="InterPro" id="IPR012756">
    <property type="entry name" value="DNA-dir_RpoC2_beta_pp"/>
</dbReference>
<dbReference type="InterPro" id="IPR045867">
    <property type="entry name" value="DNA-dir_RpoC_beta_prime"/>
</dbReference>
<dbReference type="InterPro" id="IPR042102">
    <property type="entry name" value="RNA_pol_Rpb1_3_sf"/>
</dbReference>
<dbReference type="InterPro" id="IPR007083">
    <property type="entry name" value="RNA_pol_Rpb1_4"/>
</dbReference>
<dbReference type="InterPro" id="IPR007081">
    <property type="entry name" value="RNA_pol_Rpb1_5"/>
</dbReference>
<dbReference type="InterPro" id="IPR038120">
    <property type="entry name" value="Rpb1_funnel_sf"/>
</dbReference>
<dbReference type="NCBIfam" id="TIGR02388">
    <property type="entry name" value="rpoC2_cyan"/>
    <property type="match status" value="1"/>
</dbReference>
<dbReference type="PANTHER" id="PTHR19376">
    <property type="entry name" value="DNA-DIRECTED RNA POLYMERASE"/>
    <property type="match status" value="1"/>
</dbReference>
<dbReference type="PANTHER" id="PTHR19376:SF63">
    <property type="entry name" value="DNA-DIRECTED RNA POLYMERASE SUBUNIT BETA"/>
    <property type="match status" value="1"/>
</dbReference>
<dbReference type="Pfam" id="PF05000">
    <property type="entry name" value="RNA_pol_Rpb1_4"/>
    <property type="match status" value="1"/>
</dbReference>
<dbReference type="Pfam" id="PF04998">
    <property type="entry name" value="RNA_pol_Rpb1_5"/>
    <property type="match status" value="1"/>
</dbReference>
<dbReference type="SUPFAM" id="SSF64484">
    <property type="entry name" value="beta and beta-prime subunits of DNA dependent RNA-polymerase"/>
    <property type="match status" value="1"/>
</dbReference>
<accession>P49468</accession>
<keyword id="KW-0150">Chloroplast</keyword>
<keyword id="KW-0240">DNA-directed RNA polymerase</keyword>
<keyword id="KW-0479">Metal-binding</keyword>
<keyword id="KW-0548">Nucleotidyltransferase</keyword>
<keyword id="KW-0934">Plastid</keyword>
<keyword id="KW-0804">Transcription</keyword>
<keyword id="KW-0808">Transferase</keyword>
<keyword id="KW-0862">Zinc</keyword>
<gene>
    <name evidence="1" type="primary">rpoC2</name>
</gene>
<evidence type="ECO:0000255" key="1">
    <source>
        <dbReference type="HAMAP-Rule" id="MF_01324"/>
    </source>
</evidence>
<reference key="1">
    <citation type="journal article" date="1995" name="Plant Mol. Biol. Rep.">
        <title>The chloroplast genome of a chlorophyll a+c-containing alga, Odontella sinensis.</title>
        <authorList>
            <person name="Kowallik K.V."/>
            <person name="Stoebe B."/>
            <person name="Schaffran I."/>
            <person name="Kroth-Pancic P."/>
            <person name="Freier U."/>
        </authorList>
    </citation>
    <scope>NUCLEOTIDE SEQUENCE [LARGE SCALE GENOMIC DNA]</scope>
</reference>
<proteinExistence type="inferred from homology"/>
<name>RPOC2_TRICV</name>